<organism>
    <name type="scientific">Zygosaccharomyces rouxii</name>
    <dbReference type="NCBI Taxonomy" id="4956"/>
    <lineage>
        <taxon>Eukaryota</taxon>
        <taxon>Fungi</taxon>
        <taxon>Dikarya</taxon>
        <taxon>Ascomycota</taxon>
        <taxon>Saccharomycotina</taxon>
        <taxon>Saccharomycetes</taxon>
        <taxon>Saccharomycetales</taxon>
        <taxon>Saccharomycetaceae</taxon>
        <taxon>Zygosaccharomyces</taxon>
    </lineage>
</organism>
<sequence>MATHEEFIRTQVFGTVFEITNRYTDLNPVGMGAFGLVCSATDTLVGQPVAIKKIMKPFSTAVLAKRTYRELKLLKHLRHENLICLQDIFLSPLEDIYFVTELQGTDLHRLLQTRPLEKQFVQYFLYQILRGLKYVHSAGVIHRDLKPSNILINENCDLKICDFGLARIQDPQMTGYVSTRYYRAPEIMLTWQKYDVEVDIWSAGCIFSEMIEGKPLFPGKDHVHQFSIITDLLGSPPRDVINTICSENTLKFVTSLPHRDPVPFQERFKTVEPDAVDLLRRMLVFVPKKRITAADALVHPYLAPYHDPTDEPTAEAQFDWDFNDADLPVDTWRVMMYSEILDFHKIGGGDGQIDTNAAFDDQVAAAHAAAMAQHHHQTQQQSSGKHTNPTTSSSAATITVTVPIAITMPSLIMVIKRFTT</sequence>
<evidence type="ECO:0000250" key="1"/>
<evidence type="ECO:0000255" key="2">
    <source>
        <dbReference type="PROSITE-ProRule" id="PRU00159"/>
    </source>
</evidence>
<evidence type="ECO:0000255" key="3">
    <source>
        <dbReference type="PROSITE-ProRule" id="PRU10027"/>
    </source>
</evidence>
<evidence type="ECO:0000256" key="4">
    <source>
        <dbReference type="SAM" id="MobiDB-lite"/>
    </source>
</evidence>
<evidence type="ECO:0000269" key="5">
    <source>
    </source>
</evidence>
<name>HOG2_ZYGRO</name>
<comment type="function">
    <text evidence="5">Mitogen-activated protein kinase involved in a signal transduction pathway that is activated by changes in the osmolarity of the extracellular environment. Controls osmotic regulation of transcription of target genes.</text>
</comment>
<comment type="catalytic activity">
    <reaction>
        <text>L-seryl-[protein] + ATP = O-phospho-L-seryl-[protein] + ADP + H(+)</text>
        <dbReference type="Rhea" id="RHEA:17989"/>
        <dbReference type="Rhea" id="RHEA-COMP:9863"/>
        <dbReference type="Rhea" id="RHEA-COMP:11604"/>
        <dbReference type="ChEBI" id="CHEBI:15378"/>
        <dbReference type="ChEBI" id="CHEBI:29999"/>
        <dbReference type="ChEBI" id="CHEBI:30616"/>
        <dbReference type="ChEBI" id="CHEBI:83421"/>
        <dbReference type="ChEBI" id="CHEBI:456216"/>
        <dbReference type="EC" id="2.7.11.24"/>
    </reaction>
</comment>
<comment type="catalytic activity">
    <reaction>
        <text>L-threonyl-[protein] + ATP = O-phospho-L-threonyl-[protein] + ADP + H(+)</text>
        <dbReference type="Rhea" id="RHEA:46608"/>
        <dbReference type="Rhea" id="RHEA-COMP:11060"/>
        <dbReference type="Rhea" id="RHEA-COMP:11605"/>
        <dbReference type="ChEBI" id="CHEBI:15378"/>
        <dbReference type="ChEBI" id="CHEBI:30013"/>
        <dbReference type="ChEBI" id="CHEBI:30616"/>
        <dbReference type="ChEBI" id="CHEBI:61977"/>
        <dbReference type="ChEBI" id="CHEBI:456216"/>
        <dbReference type="EC" id="2.7.11.24"/>
    </reaction>
</comment>
<comment type="cofactor">
    <cofactor evidence="1">
        <name>Mg(2+)</name>
        <dbReference type="ChEBI" id="CHEBI:18420"/>
    </cofactor>
</comment>
<comment type="activity regulation">
    <text evidence="1">Activated by tyrosine and threonine phosphorylation.</text>
</comment>
<comment type="subcellular location">
    <subcellularLocation>
        <location evidence="1">Cytoplasm</location>
    </subcellularLocation>
    <subcellularLocation>
        <location evidence="1">Nucleus</location>
    </subcellularLocation>
</comment>
<comment type="domain">
    <text>The TXY motif contains the threonine and tyrosine residues whose phosphorylation activates the MAP kinases.</text>
</comment>
<comment type="PTM">
    <text evidence="1">Dually phosphorylated on Thr-174 and Tyr-176, which activates the enzyme.</text>
</comment>
<comment type="similarity">
    <text evidence="2">Belongs to the protein kinase superfamily. Ser/Thr protein kinase family. MAP kinase subfamily. HOG1 sub-subfamily.</text>
</comment>
<dbReference type="EC" id="2.7.11.24"/>
<dbReference type="EMBL" id="AB012088">
    <property type="protein sequence ID" value="BAA25143.1"/>
    <property type="molecule type" value="Genomic_DNA"/>
</dbReference>
<dbReference type="SMR" id="O59853"/>
<dbReference type="eggNOG" id="KOG0660">
    <property type="taxonomic scope" value="Eukaryota"/>
</dbReference>
<dbReference type="GO" id="GO:0005737">
    <property type="term" value="C:cytoplasm"/>
    <property type="evidence" value="ECO:0007669"/>
    <property type="project" value="UniProtKB-SubCell"/>
</dbReference>
<dbReference type="GO" id="GO:0005634">
    <property type="term" value="C:nucleus"/>
    <property type="evidence" value="ECO:0007669"/>
    <property type="project" value="UniProtKB-SubCell"/>
</dbReference>
<dbReference type="GO" id="GO:0005524">
    <property type="term" value="F:ATP binding"/>
    <property type="evidence" value="ECO:0007669"/>
    <property type="project" value="UniProtKB-KW"/>
</dbReference>
<dbReference type="GO" id="GO:0004707">
    <property type="term" value="F:MAP kinase activity"/>
    <property type="evidence" value="ECO:0007669"/>
    <property type="project" value="UniProtKB-EC"/>
</dbReference>
<dbReference type="GO" id="GO:0106310">
    <property type="term" value="F:protein serine kinase activity"/>
    <property type="evidence" value="ECO:0007669"/>
    <property type="project" value="RHEA"/>
</dbReference>
<dbReference type="GO" id="GO:0051403">
    <property type="term" value="P:stress-activated MAPK cascade"/>
    <property type="evidence" value="ECO:0007669"/>
    <property type="project" value="InterPro"/>
</dbReference>
<dbReference type="CDD" id="cd07856">
    <property type="entry name" value="STKc_Sty1_Hog1"/>
    <property type="match status" value="1"/>
</dbReference>
<dbReference type="FunFam" id="1.10.510.10:FF:000049">
    <property type="entry name" value="Mitogen-activated protein kinase"/>
    <property type="match status" value="1"/>
</dbReference>
<dbReference type="FunFam" id="3.30.200.20:FF:000050">
    <property type="entry name" value="Mitogen-activated protein kinase"/>
    <property type="match status" value="1"/>
</dbReference>
<dbReference type="Gene3D" id="3.30.200.20">
    <property type="entry name" value="Phosphorylase Kinase, domain 1"/>
    <property type="match status" value="1"/>
</dbReference>
<dbReference type="Gene3D" id="1.10.510.10">
    <property type="entry name" value="Transferase(Phosphotransferase) domain 1"/>
    <property type="match status" value="1"/>
</dbReference>
<dbReference type="InterPro" id="IPR011009">
    <property type="entry name" value="Kinase-like_dom_sf"/>
</dbReference>
<dbReference type="InterPro" id="IPR050117">
    <property type="entry name" value="MAP_kinase"/>
</dbReference>
<dbReference type="InterPro" id="IPR003527">
    <property type="entry name" value="MAP_kinase_CS"/>
</dbReference>
<dbReference type="InterPro" id="IPR038783">
    <property type="entry name" value="MAPK_Sty1/Hog1"/>
</dbReference>
<dbReference type="InterPro" id="IPR000719">
    <property type="entry name" value="Prot_kinase_dom"/>
</dbReference>
<dbReference type="InterPro" id="IPR017441">
    <property type="entry name" value="Protein_kinase_ATP_BS"/>
</dbReference>
<dbReference type="InterPro" id="IPR008271">
    <property type="entry name" value="Ser/Thr_kinase_AS"/>
</dbReference>
<dbReference type="PANTHER" id="PTHR24055">
    <property type="entry name" value="MITOGEN-ACTIVATED PROTEIN KINASE"/>
    <property type="match status" value="1"/>
</dbReference>
<dbReference type="Pfam" id="PF00069">
    <property type="entry name" value="Pkinase"/>
    <property type="match status" value="1"/>
</dbReference>
<dbReference type="SMART" id="SM00220">
    <property type="entry name" value="S_TKc"/>
    <property type="match status" value="1"/>
</dbReference>
<dbReference type="SUPFAM" id="SSF56112">
    <property type="entry name" value="Protein kinase-like (PK-like)"/>
    <property type="match status" value="1"/>
</dbReference>
<dbReference type="PROSITE" id="PS01351">
    <property type="entry name" value="MAPK"/>
    <property type="match status" value="1"/>
</dbReference>
<dbReference type="PROSITE" id="PS00107">
    <property type="entry name" value="PROTEIN_KINASE_ATP"/>
    <property type="match status" value="1"/>
</dbReference>
<dbReference type="PROSITE" id="PS50011">
    <property type="entry name" value="PROTEIN_KINASE_DOM"/>
    <property type="match status" value="1"/>
</dbReference>
<dbReference type="PROSITE" id="PS00108">
    <property type="entry name" value="PROTEIN_KINASE_ST"/>
    <property type="match status" value="1"/>
</dbReference>
<keyword id="KW-0010">Activator</keyword>
<keyword id="KW-0067">ATP-binding</keyword>
<keyword id="KW-0963">Cytoplasm</keyword>
<keyword id="KW-0418">Kinase</keyword>
<keyword id="KW-0547">Nucleotide-binding</keyword>
<keyword id="KW-0539">Nucleus</keyword>
<keyword id="KW-0597">Phosphoprotein</keyword>
<keyword id="KW-0723">Serine/threonine-protein kinase</keyword>
<keyword id="KW-0804">Transcription</keyword>
<keyword id="KW-0805">Transcription regulation</keyword>
<keyword id="KW-0808">Transferase</keyword>
<reference key="1">
    <citation type="journal article" date="1999" name="Microbiology">
        <title>Two putative MAP kinase genes, ZrHOG1 and ZrHOG2, cloned from the salt-tolerant yeast Zygosaccharomyces rouxii are functionally homologous to the Saccharomyces cerevisiae HOG1 gene.</title>
        <authorList>
            <person name="Iwaki T."/>
            <person name="Tamai Y."/>
            <person name="Watanabe Y."/>
        </authorList>
    </citation>
    <scope>NUCLEOTIDE SEQUENCE [GENOMIC DNA]</scope>
    <scope>FUNCTION</scope>
    <source>
        <strain>ATCC 42981 / IAM 12879 / JCM 22060 / S-96</strain>
    </source>
</reference>
<accession>O59853</accession>
<proteinExistence type="inferred from homology"/>
<gene>
    <name type="primary">HOG2</name>
</gene>
<feature type="chain" id="PRO_0000289711" description="Mitogen-activated protein kinase HOG2">
    <location>
        <begin position="1"/>
        <end position="420"/>
    </location>
</feature>
<feature type="region of interest" description="Disordered" evidence="4">
    <location>
        <begin position="372"/>
        <end position="394"/>
    </location>
</feature>
<feature type="short sequence motif" description="TXY">
    <location>
        <begin position="174"/>
        <end position="176"/>
    </location>
</feature>
<feature type="active site" description="Proton acceptor" evidence="2 3">
    <location>
        <position position="144"/>
    </location>
</feature>
<feature type="binding site" evidence="2">
    <location>
        <begin position="29"/>
        <end position="37"/>
    </location>
    <ligand>
        <name>ATP</name>
        <dbReference type="ChEBI" id="CHEBI:30616"/>
    </ligand>
</feature>
<feature type="binding site" evidence="2">
    <location>
        <position position="52"/>
    </location>
    <ligand>
        <name>ATP</name>
        <dbReference type="ChEBI" id="CHEBI:30616"/>
    </ligand>
</feature>
<feature type="modified residue" description="Phosphothreonine" evidence="1">
    <location>
        <position position="174"/>
    </location>
</feature>
<feature type="modified residue" description="Phosphotyrosine" evidence="1">
    <location>
        <position position="176"/>
    </location>
</feature>
<protein>
    <recommendedName>
        <fullName>Mitogen-activated protein kinase HOG2</fullName>
        <shortName>MAP kinase HOG2</shortName>
        <ecNumber>2.7.11.24</ecNumber>
    </recommendedName>
    <alternativeName>
        <fullName>ZrHOG2</fullName>
    </alternativeName>
</protein>